<keyword id="KW-0963">Cytoplasm</keyword>
<keyword id="KW-0479">Metal-binding</keyword>
<keyword id="KW-0520">NAD</keyword>
<keyword id="KW-0808">Transferase</keyword>
<keyword id="KW-0862">Zinc</keyword>
<dbReference type="EC" id="2.3.1.286" evidence="1 2"/>
<dbReference type="EMBL" id="BX571857">
    <property type="protein sequence ID" value="CAG43906.1"/>
    <property type="molecule type" value="Genomic_DNA"/>
</dbReference>
<dbReference type="SMR" id="Q6G7B7"/>
<dbReference type="KEGG" id="sas:SAS2098"/>
<dbReference type="HOGENOM" id="CLU_023643_3_0_9"/>
<dbReference type="GO" id="GO:0005737">
    <property type="term" value="C:cytoplasm"/>
    <property type="evidence" value="ECO:0007669"/>
    <property type="project" value="UniProtKB-SubCell"/>
</dbReference>
<dbReference type="GO" id="GO:0017136">
    <property type="term" value="F:histone deacetylase activity, NAD-dependent"/>
    <property type="evidence" value="ECO:0007669"/>
    <property type="project" value="TreeGrafter"/>
</dbReference>
<dbReference type="GO" id="GO:0070403">
    <property type="term" value="F:NAD+ binding"/>
    <property type="evidence" value="ECO:0007669"/>
    <property type="project" value="UniProtKB-UniRule"/>
</dbReference>
<dbReference type="GO" id="GO:0008270">
    <property type="term" value="F:zinc ion binding"/>
    <property type="evidence" value="ECO:0007669"/>
    <property type="project" value="UniProtKB-UniRule"/>
</dbReference>
<dbReference type="CDD" id="cd01411">
    <property type="entry name" value="SIR2H"/>
    <property type="match status" value="1"/>
</dbReference>
<dbReference type="Gene3D" id="3.30.1600.10">
    <property type="entry name" value="SIR2/SIRT2 'Small Domain"/>
    <property type="match status" value="1"/>
</dbReference>
<dbReference type="Gene3D" id="3.40.50.1220">
    <property type="entry name" value="TPP-binding domain"/>
    <property type="match status" value="1"/>
</dbReference>
<dbReference type="HAMAP" id="MF_01968">
    <property type="entry name" value="Sirtuin_ClassU"/>
    <property type="match status" value="1"/>
</dbReference>
<dbReference type="InterPro" id="IPR029035">
    <property type="entry name" value="DHS-like_NAD/FAD-binding_dom"/>
</dbReference>
<dbReference type="InterPro" id="IPR050134">
    <property type="entry name" value="NAD-dep_sirtuin_deacylases"/>
</dbReference>
<dbReference type="InterPro" id="IPR003000">
    <property type="entry name" value="Sirtuin"/>
</dbReference>
<dbReference type="InterPro" id="IPR026591">
    <property type="entry name" value="Sirtuin_cat_small_dom_sf"/>
</dbReference>
<dbReference type="InterPro" id="IPR028628">
    <property type="entry name" value="Sirtuin_class_U"/>
</dbReference>
<dbReference type="InterPro" id="IPR026590">
    <property type="entry name" value="Ssirtuin_cat_dom"/>
</dbReference>
<dbReference type="NCBIfam" id="NF001752">
    <property type="entry name" value="PRK00481.1-1"/>
    <property type="match status" value="1"/>
</dbReference>
<dbReference type="PANTHER" id="PTHR11085:SF4">
    <property type="entry name" value="NAD-DEPENDENT PROTEIN DEACYLASE"/>
    <property type="match status" value="1"/>
</dbReference>
<dbReference type="PANTHER" id="PTHR11085">
    <property type="entry name" value="NAD-DEPENDENT PROTEIN DEACYLASE SIRTUIN-5, MITOCHONDRIAL-RELATED"/>
    <property type="match status" value="1"/>
</dbReference>
<dbReference type="Pfam" id="PF02146">
    <property type="entry name" value="SIR2"/>
    <property type="match status" value="1"/>
</dbReference>
<dbReference type="SUPFAM" id="SSF52467">
    <property type="entry name" value="DHS-like NAD/FAD-binding domain"/>
    <property type="match status" value="1"/>
</dbReference>
<dbReference type="PROSITE" id="PS50305">
    <property type="entry name" value="SIRTUIN"/>
    <property type="match status" value="1"/>
</dbReference>
<reference key="1">
    <citation type="journal article" date="2004" name="Proc. Natl. Acad. Sci. U.S.A.">
        <title>Complete genomes of two clinical Staphylococcus aureus strains: evidence for the rapid evolution of virulence and drug resistance.</title>
        <authorList>
            <person name="Holden M.T.G."/>
            <person name="Feil E.J."/>
            <person name="Lindsay J.A."/>
            <person name="Peacock S.J."/>
            <person name="Day N.P.J."/>
            <person name="Enright M.C."/>
            <person name="Foster T.J."/>
            <person name="Moore C.E."/>
            <person name="Hurst L."/>
            <person name="Atkin R."/>
            <person name="Barron A."/>
            <person name="Bason N."/>
            <person name="Bentley S.D."/>
            <person name="Chillingworth C."/>
            <person name="Chillingworth T."/>
            <person name="Churcher C."/>
            <person name="Clark L."/>
            <person name="Corton C."/>
            <person name="Cronin A."/>
            <person name="Doggett J."/>
            <person name="Dowd L."/>
            <person name="Feltwell T."/>
            <person name="Hance Z."/>
            <person name="Harris B."/>
            <person name="Hauser H."/>
            <person name="Holroyd S."/>
            <person name="Jagels K."/>
            <person name="James K.D."/>
            <person name="Lennard N."/>
            <person name="Line A."/>
            <person name="Mayes R."/>
            <person name="Moule S."/>
            <person name="Mungall K."/>
            <person name="Ormond D."/>
            <person name="Quail M.A."/>
            <person name="Rabbinowitsch E."/>
            <person name="Rutherford K.M."/>
            <person name="Sanders M."/>
            <person name="Sharp S."/>
            <person name="Simmonds M."/>
            <person name="Stevens K."/>
            <person name="Whitehead S."/>
            <person name="Barrell B.G."/>
            <person name="Spratt B.G."/>
            <person name="Parkhill J."/>
        </authorList>
    </citation>
    <scope>NUCLEOTIDE SEQUENCE [LARGE SCALE GENOMIC DNA]</scope>
    <source>
        <strain>MSSA476</strain>
    </source>
</reference>
<organism>
    <name type="scientific">Staphylococcus aureus (strain MSSA476)</name>
    <dbReference type="NCBI Taxonomy" id="282459"/>
    <lineage>
        <taxon>Bacteria</taxon>
        <taxon>Bacillati</taxon>
        <taxon>Bacillota</taxon>
        <taxon>Bacilli</taxon>
        <taxon>Bacillales</taxon>
        <taxon>Staphylococcaceae</taxon>
        <taxon>Staphylococcus</taxon>
    </lineage>
</organism>
<gene>
    <name evidence="1" type="primary">cobB</name>
    <name type="ordered locus">SAS2098</name>
</gene>
<accession>Q6G7B7</accession>
<comment type="function">
    <text evidence="1">NAD-dependent protein deacetylase which modulates the activities of several enzymes which are inactive in their acetylated form.</text>
</comment>
<comment type="catalytic activity">
    <reaction evidence="1">
        <text>N(6)-acetyl-L-lysyl-[protein] + NAD(+) + H2O = 2''-O-acetyl-ADP-D-ribose + nicotinamide + L-lysyl-[protein]</text>
        <dbReference type="Rhea" id="RHEA:43636"/>
        <dbReference type="Rhea" id="RHEA-COMP:9752"/>
        <dbReference type="Rhea" id="RHEA-COMP:10731"/>
        <dbReference type="ChEBI" id="CHEBI:15377"/>
        <dbReference type="ChEBI" id="CHEBI:17154"/>
        <dbReference type="ChEBI" id="CHEBI:29969"/>
        <dbReference type="ChEBI" id="CHEBI:57540"/>
        <dbReference type="ChEBI" id="CHEBI:61930"/>
        <dbReference type="ChEBI" id="CHEBI:83767"/>
        <dbReference type="EC" id="2.3.1.286"/>
    </reaction>
</comment>
<comment type="cofactor">
    <cofactor evidence="1">
        <name>Zn(2+)</name>
        <dbReference type="ChEBI" id="CHEBI:29105"/>
    </cofactor>
    <text evidence="1">Binds 1 zinc ion per subunit.</text>
</comment>
<comment type="subcellular location">
    <subcellularLocation>
        <location evidence="1">Cytoplasm</location>
    </subcellularLocation>
</comment>
<comment type="similarity">
    <text evidence="1">Belongs to the sirtuin family. Class U subfamily.</text>
</comment>
<protein>
    <recommendedName>
        <fullName evidence="1">NAD-dependent protein deacetylase</fullName>
        <ecNumber evidence="1 2">2.3.1.286</ecNumber>
    </recommendedName>
    <alternativeName>
        <fullName evidence="1">Regulatory protein SIR2 homolog</fullName>
    </alternativeName>
</protein>
<feature type="chain" id="PRO_0000110354" description="NAD-dependent protein deacetylase">
    <location>
        <begin position="1"/>
        <end position="243"/>
    </location>
</feature>
<feature type="domain" description="Deacetylase sirtuin-type" evidence="2">
    <location>
        <begin position="1"/>
        <end position="243"/>
    </location>
</feature>
<feature type="active site" description="Proton acceptor" evidence="2">
    <location>
        <position position="123"/>
    </location>
</feature>
<feature type="binding site" evidence="1">
    <location>
        <position position="24"/>
    </location>
    <ligand>
        <name>NAD(+)</name>
        <dbReference type="ChEBI" id="CHEBI:57540"/>
    </ligand>
</feature>
<feature type="binding site" evidence="1">
    <location>
        <position position="35"/>
    </location>
    <ligand>
        <name>NAD(+)</name>
        <dbReference type="ChEBI" id="CHEBI:57540"/>
    </ligand>
</feature>
<feature type="binding site" evidence="1">
    <location>
        <position position="35"/>
    </location>
    <ligand>
        <name>nicotinamide</name>
        <dbReference type="ChEBI" id="CHEBI:17154"/>
    </ligand>
</feature>
<feature type="binding site" evidence="1">
    <location>
        <position position="36"/>
    </location>
    <ligand>
        <name>NAD(+)</name>
        <dbReference type="ChEBI" id="CHEBI:57540"/>
    </ligand>
</feature>
<feature type="binding site" evidence="1">
    <location>
        <position position="105"/>
    </location>
    <ligand>
        <name>NAD(+)</name>
        <dbReference type="ChEBI" id="CHEBI:57540"/>
    </ligand>
</feature>
<feature type="binding site" evidence="1">
    <location>
        <position position="107"/>
    </location>
    <ligand>
        <name>NAD(+)</name>
        <dbReference type="ChEBI" id="CHEBI:57540"/>
    </ligand>
</feature>
<feature type="binding site" evidence="1">
    <location>
        <position position="107"/>
    </location>
    <ligand>
        <name>nicotinamide</name>
        <dbReference type="ChEBI" id="CHEBI:17154"/>
    </ligand>
</feature>
<feature type="binding site" evidence="1">
    <location>
        <position position="108"/>
    </location>
    <ligand>
        <name>NAD(+)</name>
        <dbReference type="ChEBI" id="CHEBI:57540"/>
    </ligand>
</feature>
<feature type="binding site" evidence="1">
    <location>
        <position position="108"/>
    </location>
    <ligand>
        <name>nicotinamide</name>
        <dbReference type="ChEBI" id="CHEBI:17154"/>
    </ligand>
</feature>
<feature type="binding site" evidence="1">
    <location>
        <position position="123"/>
    </location>
    <ligand>
        <name>NAD(+)</name>
        <dbReference type="ChEBI" id="CHEBI:57540"/>
    </ligand>
</feature>
<feature type="binding site" evidence="1">
    <location>
        <position position="131"/>
    </location>
    <ligand>
        <name>Zn(2+)</name>
        <dbReference type="ChEBI" id="CHEBI:29105"/>
    </ligand>
</feature>
<feature type="binding site" evidence="1">
    <location>
        <position position="134"/>
    </location>
    <ligand>
        <name>Zn(2+)</name>
        <dbReference type="ChEBI" id="CHEBI:29105"/>
    </ligand>
</feature>
<feature type="binding site" evidence="1">
    <location>
        <position position="151"/>
    </location>
    <ligand>
        <name>Zn(2+)</name>
        <dbReference type="ChEBI" id="CHEBI:29105"/>
    </ligand>
</feature>
<feature type="binding site" evidence="1">
    <location>
        <position position="154"/>
    </location>
    <ligand>
        <name>Zn(2+)</name>
        <dbReference type="ChEBI" id="CHEBI:29105"/>
    </ligand>
</feature>
<feature type="binding site" evidence="1">
    <location>
        <position position="192"/>
    </location>
    <ligand>
        <name>NAD(+)</name>
        <dbReference type="ChEBI" id="CHEBI:57540"/>
    </ligand>
</feature>
<feature type="binding site" evidence="1">
    <location>
        <position position="193"/>
    </location>
    <ligand>
        <name>NAD(+)</name>
        <dbReference type="ChEBI" id="CHEBI:57540"/>
    </ligand>
</feature>
<feature type="binding site" evidence="1">
    <location>
        <position position="215"/>
    </location>
    <ligand>
        <name>NAD(+)</name>
        <dbReference type="ChEBI" id="CHEBI:57540"/>
    </ligand>
</feature>
<feature type="binding site" evidence="1">
    <location>
        <position position="232"/>
    </location>
    <ligand>
        <name>NAD(+)</name>
        <dbReference type="ChEBI" id="CHEBI:57540"/>
    </ligand>
</feature>
<sequence>MRNDLETLKHIIDSSNRITFFTGAGVSVASGVPDFRSMGGLFDEISKDGLSPEYLLSRDYLEDDPEGFINFCHKRLLFVDTKPNIVHDWIAKLERNQQSLGVITQNIDGLHSDAGSQHVDELHGTLNRFYCNACHKSYTKSDVIDRTLKHCDNCGGAIRPDIVLYGEMLDQPTIIRSLNKIEHADTLVVLGSSLVVQPAAGLISNFKGDNLIIINKDRTPYDRDATLVIHDDMVSVVKSLMTE</sequence>
<proteinExistence type="inferred from homology"/>
<evidence type="ECO:0000255" key="1">
    <source>
        <dbReference type="HAMAP-Rule" id="MF_01968"/>
    </source>
</evidence>
<evidence type="ECO:0000255" key="2">
    <source>
        <dbReference type="PROSITE-ProRule" id="PRU00236"/>
    </source>
</evidence>
<name>NPD_STAAS</name>